<reference evidence="3" key="1">
    <citation type="journal article" date="1989" name="Comp. Biochem. Physiol.">
        <title>The relationship between N-terminal sequences and immunological characterization of crustacean hemocyanins.</title>
        <authorList>
            <person name="Neuteboom B."/>
            <person name="Sierdsema S.J."/>
            <person name="Beintema J.J."/>
        </authorList>
    </citation>
    <scope>PROTEIN SEQUENCE</scope>
    <source>
        <tissue>Hemolymph</tissue>
    </source>
</reference>
<organism evidence="3">
    <name type="scientific">Cherax destructor</name>
    <name type="common">Common yabby crayfish</name>
    <dbReference type="NCBI Taxonomy" id="6723"/>
    <lineage>
        <taxon>Eukaryota</taxon>
        <taxon>Metazoa</taxon>
        <taxon>Ecdysozoa</taxon>
        <taxon>Arthropoda</taxon>
        <taxon>Crustacea</taxon>
        <taxon>Multicrustacea</taxon>
        <taxon>Malacostraca</taxon>
        <taxon>Eumalacostraca</taxon>
        <taxon>Eucarida</taxon>
        <taxon>Decapoda</taxon>
        <taxon>Pleocyemata</taxon>
        <taxon>Astacidea</taxon>
        <taxon>Parastacoidea</taxon>
        <taxon>Parastacidae</taxon>
        <taxon>Cherax</taxon>
    </lineage>
</organism>
<feature type="chain" id="PRO_0000204262" description="Hemocyanin C chain">
    <location>
        <begin position="1"/>
        <end position="32" status="greater than"/>
    </location>
</feature>
<feature type="unsure residue" description="A or V">
    <location>
        <position position="6"/>
    </location>
</feature>
<feature type="non-terminal residue" evidence="2">
    <location>
        <position position="32"/>
    </location>
</feature>
<dbReference type="PIR" id="F60529">
    <property type="entry name" value="F60529"/>
</dbReference>
<dbReference type="SMR" id="P83172"/>
<dbReference type="GO" id="GO:0005576">
    <property type="term" value="C:extracellular region"/>
    <property type="evidence" value="ECO:0007669"/>
    <property type="project" value="UniProtKB-SubCell"/>
</dbReference>
<dbReference type="GO" id="GO:0005344">
    <property type="term" value="F:oxygen carrier activity"/>
    <property type="evidence" value="ECO:0000314"/>
    <property type="project" value="UniProtKB"/>
</dbReference>
<dbReference type="GO" id="GO:0015671">
    <property type="term" value="P:oxygen transport"/>
    <property type="evidence" value="ECO:0000304"/>
    <property type="project" value="UniProtKB"/>
</dbReference>
<comment type="function">
    <text evidence="1">Hemocyanins are copper-containing oxygen carriers occurring freely dissolved in the hemolymph of many mollusks and arthropods.</text>
</comment>
<comment type="subcellular location">
    <subcellularLocation>
        <location>Secreted</location>
        <location>Extracellular space</location>
    </subcellularLocation>
</comment>
<comment type="tissue specificity">
    <text>Hemolymph.</text>
</comment>
<comment type="similarity">
    <text evidence="3">Belongs to the tyrosinase family. Hemocyanin subfamily.</text>
</comment>
<keyword id="KW-0186">Copper</keyword>
<keyword id="KW-0903">Direct protein sequencing</keyword>
<keyword id="KW-0561">Oxygen transport</keyword>
<keyword id="KW-0964">Secreted</keyword>
<keyword id="KW-0813">Transport</keyword>
<accession>P83172</accession>
<evidence type="ECO:0000269" key="1">
    <source>
    </source>
</evidence>
<evidence type="ECO:0000303" key="2">
    <source>
    </source>
</evidence>
<evidence type="ECO:0000305" key="3"/>
<name>HCYC_CHEDE</name>
<protein>
    <recommendedName>
        <fullName>Hemocyanin C chain</fullName>
    </recommendedName>
</protein>
<sequence length="32" mass="3513">DGSGGASDAQKQHDVNYLLFKVYEDVNDENSP</sequence>
<proteinExistence type="evidence at protein level"/>